<keyword id="KW-0413">Isomerase</keyword>
<keyword id="KW-1185">Reference proteome</keyword>
<feature type="chain" id="PRO_0000158505" description="Ribose-5-phosphate isomerase A">
    <location>
        <begin position="1"/>
        <end position="237"/>
    </location>
</feature>
<feature type="active site" description="Proton acceptor" evidence="1">
    <location>
        <position position="108"/>
    </location>
</feature>
<feature type="binding site" evidence="1">
    <location>
        <begin position="32"/>
        <end position="35"/>
    </location>
    <ligand>
        <name>substrate</name>
    </ligand>
</feature>
<feature type="binding site" evidence="1">
    <location>
        <begin position="85"/>
        <end position="88"/>
    </location>
    <ligand>
        <name>substrate</name>
    </ligand>
</feature>
<feature type="binding site" evidence="1">
    <location>
        <begin position="99"/>
        <end position="102"/>
    </location>
    <ligand>
        <name>substrate</name>
    </ligand>
</feature>
<feature type="binding site" evidence="1">
    <location>
        <position position="126"/>
    </location>
    <ligand>
        <name>substrate</name>
    </ligand>
</feature>
<evidence type="ECO:0000255" key="1">
    <source>
        <dbReference type="HAMAP-Rule" id="MF_00170"/>
    </source>
</evidence>
<sequence length="237" mass="24761">MGGCDPMDEAARGALDLLGRIGGELGVLGVGTGRTVMRFLREASARGVEPGVAVPSSFETAVELAGLGWSVGDPRVYRGVNVYVDGADEAEPGRGYMVKGGGGALLGEKILSSRSKLNIFIVGEDRLVGRLGEKTPVPVEVEPGFVSMVLASLEELGLNPRVRTSPGKRGPVVSDWGGVIVDLLTGPLEDPRGLESMLRNVPGVRETGLFLGLADYIVVGLSSCGYRVLGPYRGRAV</sequence>
<dbReference type="EC" id="5.3.1.6" evidence="1"/>
<dbReference type="EMBL" id="BA000002">
    <property type="protein sequence ID" value="BAA79637.1"/>
    <property type="molecule type" value="Genomic_DNA"/>
</dbReference>
<dbReference type="PIR" id="E72654">
    <property type="entry name" value="E72654"/>
</dbReference>
<dbReference type="RefSeq" id="WP_010865889.1">
    <property type="nucleotide sequence ID" value="NC_000854.2"/>
</dbReference>
<dbReference type="SMR" id="Q9YEA9"/>
<dbReference type="STRING" id="272557.APE_0665"/>
<dbReference type="EnsemblBacteria" id="BAA79637">
    <property type="protein sequence ID" value="BAA79637"/>
    <property type="gene ID" value="APE_0665"/>
</dbReference>
<dbReference type="GeneID" id="1444800"/>
<dbReference type="KEGG" id="ape:APE_0665"/>
<dbReference type="PATRIC" id="fig|272557.25.peg.477"/>
<dbReference type="eggNOG" id="arCOG01122">
    <property type="taxonomic scope" value="Archaea"/>
</dbReference>
<dbReference type="UniPathway" id="UPA00115">
    <property type="reaction ID" value="UER00412"/>
</dbReference>
<dbReference type="Proteomes" id="UP000002518">
    <property type="component" value="Chromosome"/>
</dbReference>
<dbReference type="GO" id="GO:0005829">
    <property type="term" value="C:cytosol"/>
    <property type="evidence" value="ECO:0007669"/>
    <property type="project" value="TreeGrafter"/>
</dbReference>
<dbReference type="GO" id="GO:0004751">
    <property type="term" value="F:ribose-5-phosphate isomerase activity"/>
    <property type="evidence" value="ECO:0007669"/>
    <property type="project" value="UniProtKB-UniRule"/>
</dbReference>
<dbReference type="GO" id="GO:0006014">
    <property type="term" value="P:D-ribose metabolic process"/>
    <property type="evidence" value="ECO:0007669"/>
    <property type="project" value="TreeGrafter"/>
</dbReference>
<dbReference type="GO" id="GO:0009052">
    <property type="term" value="P:pentose-phosphate shunt, non-oxidative branch"/>
    <property type="evidence" value="ECO:0007669"/>
    <property type="project" value="UniProtKB-UniRule"/>
</dbReference>
<dbReference type="CDD" id="cd01398">
    <property type="entry name" value="RPI_A"/>
    <property type="match status" value="1"/>
</dbReference>
<dbReference type="Gene3D" id="3.30.70.260">
    <property type="match status" value="1"/>
</dbReference>
<dbReference type="Gene3D" id="3.40.50.1360">
    <property type="match status" value="1"/>
</dbReference>
<dbReference type="HAMAP" id="MF_00170">
    <property type="entry name" value="Rib_5P_isom_A"/>
    <property type="match status" value="1"/>
</dbReference>
<dbReference type="InterPro" id="IPR037171">
    <property type="entry name" value="NagB/RpiA_transferase-like"/>
</dbReference>
<dbReference type="InterPro" id="IPR020672">
    <property type="entry name" value="Ribose5P_isomerase_typA_subgr"/>
</dbReference>
<dbReference type="InterPro" id="IPR004788">
    <property type="entry name" value="Ribose5P_isomerase_type_A"/>
</dbReference>
<dbReference type="NCBIfam" id="TIGR00021">
    <property type="entry name" value="rpiA"/>
    <property type="match status" value="1"/>
</dbReference>
<dbReference type="PANTHER" id="PTHR11934">
    <property type="entry name" value="RIBOSE-5-PHOSPHATE ISOMERASE"/>
    <property type="match status" value="1"/>
</dbReference>
<dbReference type="PANTHER" id="PTHR11934:SF0">
    <property type="entry name" value="RIBOSE-5-PHOSPHATE ISOMERASE"/>
    <property type="match status" value="1"/>
</dbReference>
<dbReference type="Pfam" id="PF06026">
    <property type="entry name" value="Rib_5-P_isom_A"/>
    <property type="match status" value="1"/>
</dbReference>
<dbReference type="SUPFAM" id="SSF75445">
    <property type="entry name" value="D-ribose-5-phosphate isomerase (RpiA), lid domain"/>
    <property type="match status" value="1"/>
</dbReference>
<dbReference type="SUPFAM" id="SSF100950">
    <property type="entry name" value="NagB/RpiA/CoA transferase-like"/>
    <property type="match status" value="1"/>
</dbReference>
<comment type="function">
    <text evidence="1">Catalyzes the reversible conversion of ribose-5-phosphate to ribulose 5-phosphate.</text>
</comment>
<comment type="catalytic activity">
    <reaction evidence="1">
        <text>aldehydo-D-ribose 5-phosphate = D-ribulose 5-phosphate</text>
        <dbReference type="Rhea" id="RHEA:14657"/>
        <dbReference type="ChEBI" id="CHEBI:58121"/>
        <dbReference type="ChEBI" id="CHEBI:58273"/>
        <dbReference type="EC" id="5.3.1.6"/>
    </reaction>
</comment>
<comment type="pathway">
    <text evidence="1">Carbohydrate degradation; pentose phosphate pathway; D-ribose 5-phosphate from D-ribulose 5-phosphate (non-oxidative stage): step 1/1.</text>
</comment>
<comment type="subunit">
    <text evidence="1">Homodimer.</text>
</comment>
<comment type="similarity">
    <text evidence="1">Belongs to the ribose 5-phosphate isomerase family.</text>
</comment>
<gene>
    <name evidence="1" type="primary">rpiA</name>
    <name type="ordered locus">APE_0665</name>
</gene>
<protein>
    <recommendedName>
        <fullName evidence="1">Ribose-5-phosphate isomerase A</fullName>
        <ecNumber evidence="1">5.3.1.6</ecNumber>
    </recommendedName>
    <alternativeName>
        <fullName evidence="1">Phosphoriboisomerase A</fullName>
        <shortName evidence="1">PRI</shortName>
    </alternativeName>
</protein>
<accession>Q9YEA9</accession>
<reference key="1">
    <citation type="journal article" date="1999" name="DNA Res.">
        <title>Complete genome sequence of an aerobic hyper-thermophilic crenarchaeon, Aeropyrum pernix K1.</title>
        <authorList>
            <person name="Kawarabayasi Y."/>
            <person name="Hino Y."/>
            <person name="Horikawa H."/>
            <person name="Yamazaki S."/>
            <person name="Haikawa Y."/>
            <person name="Jin-no K."/>
            <person name="Takahashi M."/>
            <person name="Sekine M."/>
            <person name="Baba S."/>
            <person name="Ankai A."/>
            <person name="Kosugi H."/>
            <person name="Hosoyama A."/>
            <person name="Fukui S."/>
            <person name="Nagai Y."/>
            <person name="Nishijima K."/>
            <person name="Nakazawa H."/>
            <person name="Takamiya M."/>
            <person name="Masuda S."/>
            <person name="Funahashi T."/>
            <person name="Tanaka T."/>
            <person name="Kudoh Y."/>
            <person name="Yamazaki J."/>
            <person name="Kushida N."/>
            <person name="Oguchi A."/>
            <person name="Aoki K."/>
            <person name="Kubota K."/>
            <person name="Nakamura Y."/>
            <person name="Nomura N."/>
            <person name="Sako Y."/>
            <person name="Kikuchi H."/>
        </authorList>
    </citation>
    <scope>NUCLEOTIDE SEQUENCE [LARGE SCALE GENOMIC DNA]</scope>
    <source>
        <strain>ATCC 700893 / DSM 11879 / JCM 9820 / NBRC 100138 / K1</strain>
    </source>
</reference>
<name>RPIA_AERPE</name>
<proteinExistence type="inferred from homology"/>
<organism>
    <name type="scientific">Aeropyrum pernix (strain ATCC 700893 / DSM 11879 / JCM 9820 / NBRC 100138 / K1)</name>
    <dbReference type="NCBI Taxonomy" id="272557"/>
    <lineage>
        <taxon>Archaea</taxon>
        <taxon>Thermoproteota</taxon>
        <taxon>Thermoprotei</taxon>
        <taxon>Desulfurococcales</taxon>
        <taxon>Desulfurococcaceae</taxon>
        <taxon>Aeropyrum</taxon>
    </lineage>
</organism>